<sequence length="368" mass="42118">MSSESDTDTEDEIARERLIELASDFYDQFAEGEVPTMEIPTRTKSNIVFDEDKDVWVYGDRTSTRSANSVRGAQKLLKAIYTIEFLADQLEQGRSSTLRELYYLSESWDEERAQFNDQDESNQLVEDLEIVSKVTREDFHMRPEESGATIMGPLYLREQTRRGEREIHCQKDVGEGGYQIPNNPDTIEFLDNDADFVLCVETGGMRDRLVENGFDEEHNVIIVHLKGQPARATRRITKRLHDDLDLPVVVFCDGDPWSYRIYASVAYGSIKSAHLSEYLATPEAEYIGIQPADIVEYDLPTDPLSDSDINALESELDDPRFQDDYWREQIELQLDIGKKAEQQALASRGLDFVTETYLPERLGEMGVL</sequence>
<protein>
    <recommendedName>
        <fullName evidence="1">Type 2 DNA topoisomerase 6 subunit A</fullName>
        <ecNumber evidence="1">5.6.2.2</ecNumber>
    </recommendedName>
    <alternativeName>
        <fullName evidence="1">Type II DNA topoisomerase VI subunit A</fullName>
    </alternativeName>
</protein>
<accession>Q3IPW7</accession>
<dbReference type="EC" id="5.6.2.2" evidence="1"/>
<dbReference type="EMBL" id="CR936257">
    <property type="protein sequence ID" value="CAI49831.1"/>
    <property type="molecule type" value="Genomic_DNA"/>
</dbReference>
<dbReference type="RefSeq" id="WP_011323451.1">
    <property type="nucleotide sequence ID" value="NC_007426.1"/>
</dbReference>
<dbReference type="SMR" id="Q3IPW7"/>
<dbReference type="STRING" id="348780.NP_3480A"/>
<dbReference type="EnsemblBacteria" id="CAI49831">
    <property type="protein sequence ID" value="CAI49831"/>
    <property type="gene ID" value="NP_3480A"/>
</dbReference>
<dbReference type="GeneID" id="3703275"/>
<dbReference type="KEGG" id="nph:NP_3480A"/>
<dbReference type="eggNOG" id="arCOG04143">
    <property type="taxonomic scope" value="Archaea"/>
</dbReference>
<dbReference type="HOGENOM" id="CLU_037229_1_0_2"/>
<dbReference type="OrthoDB" id="5866at2157"/>
<dbReference type="Proteomes" id="UP000002698">
    <property type="component" value="Chromosome"/>
</dbReference>
<dbReference type="GO" id="GO:0005694">
    <property type="term" value="C:chromosome"/>
    <property type="evidence" value="ECO:0007669"/>
    <property type="project" value="InterPro"/>
</dbReference>
<dbReference type="GO" id="GO:0005524">
    <property type="term" value="F:ATP binding"/>
    <property type="evidence" value="ECO:0007669"/>
    <property type="project" value="UniProtKB-KW"/>
</dbReference>
<dbReference type="GO" id="GO:0003677">
    <property type="term" value="F:DNA binding"/>
    <property type="evidence" value="ECO:0007669"/>
    <property type="project" value="UniProtKB-UniRule"/>
</dbReference>
<dbReference type="GO" id="GO:0003918">
    <property type="term" value="F:DNA topoisomerase type II (double strand cut, ATP-hydrolyzing) activity"/>
    <property type="evidence" value="ECO:0007669"/>
    <property type="project" value="UniProtKB-UniRule"/>
</dbReference>
<dbReference type="GO" id="GO:0000287">
    <property type="term" value="F:magnesium ion binding"/>
    <property type="evidence" value="ECO:0007669"/>
    <property type="project" value="UniProtKB-UniRule"/>
</dbReference>
<dbReference type="GO" id="GO:0006265">
    <property type="term" value="P:DNA topological change"/>
    <property type="evidence" value="ECO:0007669"/>
    <property type="project" value="UniProtKB-UniRule"/>
</dbReference>
<dbReference type="CDD" id="cd00223">
    <property type="entry name" value="TOPRIM_TopoIIB_SPO"/>
    <property type="match status" value="1"/>
</dbReference>
<dbReference type="FunFam" id="3.40.1360.10:FF:000011">
    <property type="entry name" value="Type 2 DNA topoisomerase 6 subunit A"/>
    <property type="match status" value="1"/>
</dbReference>
<dbReference type="Gene3D" id="3.40.1360.10">
    <property type="match status" value="1"/>
</dbReference>
<dbReference type="Gene3D" id="1.10.10.10">
    <property type="entry name" value="Winged helix-like DNA-binding domain superfamily/Winged helix DNA-binding domain"/>
    <property type="match status" value="1"/>
</dbReference>
<dbReference type="HAMAP" id="MF_00132">
    <property type="entry name" value="Top6A"/>
    <property type="match status" value="1"/>
</dbReference>
<dbReference type="InterPro" id="IPR002815">
    <property type="entry name" value="Spo11/TopoVI_A"/>
</dbReference>
<dbReference type="InterPro" id="IPR013049">
    <property type="entry name" value="Spo11/TopoVI_A_N"/>
</dbReference>
<dbReference type="InterPro" id="IPR036078">
    <property type="entry name" value="Spo11/TopoVI_A_sf"/>
</dbReference>
<dbReference type="InterPro" id="IPR049333">
    <property type="entry name" value="Topo_VI_alpha"/>
</dbReference>
<dbReference type="InterPro" id="IPR004085">
    <property type="entry name" value="TopoVI_A"/>
</dbReference>
<dbReference type="InterPro" id="IPR034136">
    <property type="entry name" value="TOPRIM_Topo6A/Spo11"/>
</dbReference>
<dbReference type="InterPro" id="IPR036388">
    <property type="entry name" value="WH-like_DNA-bd_sf"/>
</dbReference>
<dbReference type="NCBIfam" id="NF003332">
    <property type="entry name" value="PRK04342.1-1"/>
    <property type="match status" value="1"/>
</dbReference>
<dbReference type="PANTHER" id="PTHR10848">
    <property type="entry name" value="MEIOTIC RECOMBINATION PROTEIN SPO11"/>
    <property type="match status" value="1"/>
</dbReference>
<dbReference type="PANTHER" id="PTHR10848:SF0">
    <property type="entry name" value="MEIOTIC RECOMBINATION PROTEIN SPO11"/>
    <property type="match status" value="1"/>
</dbReference>
<dbReference type="Pfam" id="PF21180">
    <property type="entry name" value="TOP6A-Spo11_Toprim"/>
    <property type="match status" value="1"/>
</dbReference>
<dbReference type="Pfam" id="PF20768">
    <property type="entry name" value="Topo_VI_alpha"/>
    <property type="match status" value="1"/>
</dbReference>
<dbReference type="Pfam" id="PF04406">
    <property type="entry name" value="TP6A_N"/>
    <property type="match status" value="1"/>
</dbReference>
<dbReference type="PRINTS" id="PR01550">
    <property type="entry name" value="TOP6AFAMILY"/>
</dbReference>
<dbReference type="PRINTS" id="PR01552">
    <property type="entry name" value="TPISMRASE6A"/>
</dbReference>
<dbReference type="SUPFAM" id="SSF56726">
    <property type="entry name" value="DNA topoisomerase IV, alpha subunit"/>
    <property type="match status" value="1"/>
</dbReference>
<dbReference type="PROSITE" id="PS52041">
    <property type="entry name" value="TOPO_IIB"/>
    <property type="match status" value="1"/>
</dbReference>
<gene>
    <name evidence="1" type="primary">top6A</name>
    <name type="ordered locus">NP_3480A</name>
</gene>
<reference key="1">
    <citation type="journal article" date="2005" name="Genome Res.">
        <title>Living with two extremes: conclusions from the genome sequence of Natronomonas pharaonis.</title>
        <authorList>
            <person name="Falb M."/>
            <person name="Pfeiffer F."/>
            <person name="Palm P."/>
            <person name="Rodewald K."/>
            <person name="Hickmann V."/>
            <person name="Tittor J."/>
            <person name="Oesterhelt D."/>
        </authorList>
    </citation>
    <scope>NUCLEOTIDE SEQUENCE [LARGE SCALE GENOMIC DNA]</scope>
    <source>
        <strain>ATCC 35678 / DSM 2160 / CIP 103997 / JCM 8858 / NBRC 14720 / NCIMB 2260 / Gabara</strain>
    </source>
</reference>
<organism>
    <name type="scientific">Natronomonas pharaonis (strain ATCC 35678 / DSM 2160 / CIP 103997 / JCM 8858 / NBRC 14720 / NCIMB 2260 / Gabara)</name>
    <name type="common">Halobacterium pharaonis</name>
    <dbReference type="NCBI Taxonomy" id="348780"/>
    <lineage>
        <taxon>Archaea</taxon>
        <taxon>Methanobacteriati</taxon>
        <taxon>Methanobacteriota</taxon>
        <taxon>Stenosarchaea group</taxon>
        <taxon>Halobacteria</taxon>
        <taxon>Halobacteriales</taxon>
        <taxon>Haloarculaceae</taxon>
        <taxon>Natronomonas</taxon>
    </lineage>
</organism>
<keyword id="KW-0067">ATP-binding</keyword>
<keyword id="KW-0238">DNA-binding</keyword>
<keyword id="KW-0413">Isomerase</keyword>
<keyword id="KW-0460">Magnesium</keyword>
<keyword id="KW-0479">Metal-binding</keyword>
<keyword id="KW-0547">Nucleotide-binding</keyword>
<keyword id="KW-1185">Reference proteome</keyword>
<keyword id="KW-0799">Topoisomerase</keyword>
<comment type="function">
    <text evidence="1">Relaxes both positive and negative superturns and exhibits a strong decatenase activity.</text>
</comment>
<comment type="catalytic activity">
    <reaction evidence="1">
        <text>ATP-dependent breakage, passage and rejoining of double-stranded DNA.</text>
        <dbReference type="EC" id="5.6.2.2"/>
    </reaction>
</comment>
<comment type="cofactor">
    <cofactor evidence="1">
        <name>Mg(2+)</name>
        <dbReference type="ChEBI" id="CHEBI:18420"/>
    </cofactor>
</comment>
<comment type="subunit">
    <text evidence="1">Homodimer. Heterotetramer of two Top6A and two Top6B chains.</text>
</comment>
<comment type="similarity">
    <text evidence="1">Belongs to the TOP6A family.</text>
</comment>
<proteinExistence type="inferred from homology"/>
<evidence type="ECO:0000255" key="1">
    <source>
        <dbReference type="HAMAP-Rule" id="MF_00132"/>
    </source>
</evidence>
<evidence type="ECO:0000255" key="2">
    <source>
        <dbReference type="PROSITE-ProRule" id="PRU01385"/>
    </source>
</evidence>
<name>TOP6A_NATPD</name>
<feature type="chain" id="PRO_1000018316" description="Type 2 DNA topoisomerase 6 subunit A">
    <location>
        <begin position="1"/>
        <end position="368"/>
    </location>
</feature>
<feature type="domain" description="Topo IIA-type catalytic" evidence="2">
    <location>
        <begin position="9"/>
        <end position="148"/>
    </location>
</feature>
<feature type="active site" description="O-(5'-phospho-DNA)-tyrosine intermediate" evidence="2">
    <location>
        <position position="103"/>
    </location>
</feature>
<feature type="binding site" evidence="1">
    <location>
        <position position="201"/>
    </location>
    <ligand>
        <name>Mg(2+)</name>
        <dbReference type="ChEBI" id="CHEBI:18420"/>
    </ligand>
</feature>
<feature type="binding site" evidence="1">
    <location>
        <position position="253"/>
    </location>
    <ligand>
        <name>Mg(2+)</name>
        <dbReference type="ChEBI" id="CHEBI:18420"/>
    </ligand>
</feature>